<proteinExistence type="inferred from homology"/>
<comment type="similarity">
    <text evidence="1">Belongs to the UPF0597 family.</text>
</comment>
<protein>
    <recommendedName>
        <fullName evidence="1">UPF0597 protein YhaM</fullName>
    </recommendedName>
</protein>
<feature type="chain" id="PRO_1000188451" description="UPF0597 protein YhaM">
    <location>
        <begin position="1"/>
        <end position="436"/>
    </location>
</feature>
<organism>
    <name type="scientific">Escherichia coli O45:K1 (strain S88 / ExPEC)</name>
    <dbReference type="NCBI Taxonomy" id="585035"/>
    <lineage>
        <taxon>Bacteria</taxon>
        <taxon>Pseudomonadati</taxon>
        <taxon>Pseudomonadota</taxon>
        <taxon>Gammaproteobacteria</taxon>
        <taxon>Enterobacterales</taxon>
        <taxon>Enterobacteriaceae</taxon>
        <taxon>Escherichia</taxon>
    </lineage>
</organism>
<evidence type="ECO:0000255" key="1">
    <source>
        <dbReference type="HAMAP-Rule" id="MF_01845"/>
    </source>
</evidence>
<gene>
    <name evidence="1" type="primary">yhaM</name>
    <name type="ordered locus">ECS88_3503</name>
</gene>
<reference key="1">
    <citation type="journal article" date="2009" name="PLoS Genet.">
        <title>Organised genome dynamics in the Escherichia coli species results in highly diverse adaptive paths.</title>
        <authorList>
            <person name="Touchon M."/>
            <person name="Hoede C."/>
            <person name="Tenaillon O."/>
            <person name="Barbe V."/>
            <person name="Baeriswyl S."/>
            <person name="Bidet P."/>
            <person name="Bingen E."/>
            <person name="Bonacorsi S."/>
            <person name="Bouchier C."/>
            <person name="Bouvet O."/>
            <person name="Calteau A."/>
            <person name="Chiapello H."/>
            <person name="Clermont O."/>
            <person name="Cruveiller S."/>
            <person name="Danchin A."/>
            <person name="Diard M."/>
            <person name="Dossat C."/>
            <person name="Karoui M.E."/>
            <person name="Frapy E."/>
            <person name="Garry L."/>
            <person name="Ghigo J.M."/>
            <person name="Gilles A.M."/>
            <person name="Johnson J."/>
            <person name="Le Bouguenec C."/>
            <person name="Lescat M."/>
            <person name="Mangenot S."/>
            <person name="Martinez-Jehanne V."/>
            <person name="Matic I."/>
            <person name="Nassif X."/>
            <person name="Oztas S."/>
            <person name="Petit M.A."/>
            <person name="Pichon C."/>
            <person name="Rouy Z."/>
            <person name="Ruf C.S."/>
            <person name="Schneider D."/>
            <person name="Tourret J."/>
            <person name="Vacherie B."/>
            <person name="Vallenet D."/>
            <person name="Medigue C."/>
            <person name="Rocha E.P.C."/>
            <person name="Denamur E."/>
        </authorList>
    </citation>
    <scope>NUCLEOTIDE SEQUENCE [LARGE SCALE GENOMIC DNA]</scope>
    <source>
        <strain>S88 / ExPEC</strain>
    </source>
</reference>
<sequence>MFDSTLNPLWQRYILAVQEEVKPALGCTEPISLALAAAVAAAELEGPVERVEAWVSPNLMKNGLGVTVPGTGMVGLPIAAALGALGGNANAGLEVLKDATAQAISDAKALLAAGKVSVKIQEPCDEILFSRAKVWNGEKWACVTIVGGHTNIVHIETHNGVVFTQQACVTEGEQESPLTVLSRTTLAEILKFVNEVPFAAIRFILDSAKLNCALSQEGLSGNWGLHIGATLEKQCARGLLAKDLSSSIVIRTSAASDARMGGATLPAMSNSGSGNQGITATMPVVVVAEHFGADDERLARALMLSHLSAIYIHNQLPRLSALCAATTAAMGAAAGMAWLVDGRYETISMAISSMIGDVSGMICDGASNSCAMKVSTSASAAWKAVLMALDDTAVTGNEGIVAHDVEQSIANLCALASHSMQQTDRQIIEIMASKAR</sequence>
<dbReference type="EMBL" id="CU928161">
    <property type="protein sequence ID" value="CAR04731.1"/>
    <property type="molecule type" value="Genomic_DNA"/>
</dbReference>
<dbReference type="KEGG" id="ecz:ECS88_3503"/>
<dbReference type="HOGENOM" id="CLU_051840_0_0_6"/>
<dbReference type="Proteomes" id="UP000000747">
    <property type="component" value="Chromosome"/>
</dbReference>
<dbReference type="GO" id="GO:0080146">
    <property type="term" value="F:L-cysteine desulfhydrase activity"/>
    <property type="evidence" value="ECO:0007669"/>
    <property type="project" value="TreeGrafter"/>
</dbReference>
<dbReference type="GO" id="GO:0019450">
    <property type="term" value="P:L-cysteine catabolic process to pyruvate"/>
    <property type="evidence" value="ECO:0007669"/>
    <property type="project" value="TreeGrafter"/>
</dbReference>
<dbReference type="HAMAP" id="MF_01845">
    <property type="entry name" value="UPF0597"/>
    <property type="match status" value="1"/>
</dbReference>
<dbReference type="InterPro" id="IPR005130">
    <property type="entry name" value="Ser_deHydtase-like_asu"/>
</dbReference>
<dbReference type="InterPro" id="IPR021144">
    <property type="entry name" value="UPF0597"/>
</dbReference>
<dbReference type="PANTHER" id="PTHR30501">
    <property type="entry name" value="UPF0597 PROTEIN YHAM"/>
    <property type="match status" value="1"/>
</dbReference>
<dbReference type="PANTHER" id="PTHR30501:SF2">
    <property type="entry name" value="UPF0597 PROTEIN YHAM"/>
    <property type="match status" value="1"/>
</dbReference>
<dbReference type="Pfam" id="PF03313">
    <property type="entry name" value="SDH_alpha"/>
    <property type="match status" value="1"/>
</dbReference>
<dbReference type="PIRSF" id="PIRSF006054">
    <property type="entry name" value="UCP006054"/>
    <property type="match status" value="1"/>
</dbReference>
<keyword id="KW-1185">Reference proteome</keyword>
<name>YHAM_ECO45</name>
<accession>B7MB40</accession>